<sequence>MSNLSNLRHKLQNGLIASCQPVPGSAMDTPEIVAAMACAALAGGAVGLRIEGISNIQAVRRATDAPIIGIIKRDLPDSEVRITPWLEDIDALSAAGADIIAFDVTCRERPVSVADLYQRARATGCLTMADASNIDDGLLAHHLGIDFIGTTLSGYTQATVPTEPDLALVTQLAQAGCRVIAEGRYHSPALAAAAISAGAYAVTVGSAITRIEHICGWFCDAIKQCETEKLTEY</sequence>
<protein>
    <recommendedName>
        <fullName evidence="1">Putative N-acetylmannosamine-6-phosphate 2-epimerase</fullName>
        <ecNumber evidence="1">5.1.3.9</ecNumber>
    </recommendedName>
    <alternativeName>
        <fullName evidence="1">ManNAc-6-P epimerase</fullName>
    </alternativeName>
</protein>
<keyword id="KW-0119">Carbohydrate metabolism</keyword>
<keyword id="KW-0413">Isomerase</keyword>
<feature type="chain" id="PRO_0000301500" description="Putative N-acetylmannosamine-6-phosphate 2-epimerase">
    <location>
        <begin position="1"/>
        <end position="233"/>
    </location>
</feature>
<accession>Q1CJY8</accession>
<accession>C4GRX3</accession>
<evidence type="ECO:0000255" key="1">
    <source>
        <dbReference type="HAMAP-Rule" id="MF_01235"/>
    </source>
</evidence>
<organism>
    <name type="scientific">Yersinia pestis bv. Antiqua (strain Nepal516)</name>
    <dbReference type="NCBI Taxonomy" id="377628"/>
    <lineage>
        <taxon>Bacteria</taxon>
        <taxon>Pseudomonadati</taxon>
        <taxon>Pseudomonadota</taxon>
        <taxon>Gammaproteobacteria</taxon>
        <taxon>Enterobacterales</taxon>
        <taxon>Yersiniaceae</taxon>
        <taxon>Yersinia</taxon>
    </lineage>
</organism>
<gene>
    <name evidence="1" type="primary">nanE</name>
    <name type="ordered locus">YPN_1362</name>
    <name type="ORF">YP516_1501</name>
</gene>
<reference key="1">
    <citation type="journal article" date="2006" name="J. Bacteriol.">
        <title>Complete genome sequence of Yersinia pestis strains Antiqua and Nepal516: evidence of gene reduction in an emerging pathogen.</title>
        <authorList>
            <person name="Chain P.S.G."/>
            <person name="Hu P."/>
            <person name="Malfatti S.A."/>
            <person name="Radnedge L."/>
            <person name="Larimer F."/>
            <person name="Vergez L.M."/>
            <person name="Worsham P."/>
            <person name="Chu M.C."/>
            <person name="Andersen G.L."/>
        </authorList>
    </citation>
    <scope>NUCLEOTIDE SEQUENCE [LARGE SCALE GENOMIC DNA]</scope>
    <source>
        <strain>Nepal516</strain>
    </source>
</reference>
<reference key="2">
    <citation type="submission" date="2009-04" db="EMBL/GenBank/DDBJ databases">
        <title>Yersinia pestis Nepal516A whole genome shotgun sequencing project.</title>
        <authorList>
            <person name="Plunkett G. III"/>
            <person name="Anderson B.D."/>
            <person name="Baumler D.J."/>
            <person name="Burland V."/>
            <person name="Cabot E.L."/>
            <person name="Glasner J.D."/>
            <person name="Mau B."/>
            <person name="Neeno-Eckwall E."/>
            <person name="Perna N.T."/>
            <person name="Munk A.C."/>
            <person name="Tapia R."/>
            <person name="Green L.D."/>
            <person name="Rogers Y.C."/>
            <person name="Detter J.C."/>
            <person name="Bruce D.C."/>
            <person name="Brettin T.S."/>
        </authorList>
    </citation>
    <scope>NUCLEOTIDE SEQUENCE [LARGE SCALE GENOMIC DNA]</scope>
    <source>
        <strain>Nepal516</strain>
    </source>
</reference>
<comment type="function">
    <text evidence="1">Converts N-acetylmannosamine-6-phosphate (ManNAc-6-P) to N-acetylglucosamine-6-phosphate (GlcNAc-6-P).</text>
</comment>
<comment type="catalytic activity">
    <reaction evidence="1">
        <text>an N-acyl-D-glucosamine 6-phosphate = an N-acyl-D-mannosamine 6-phosphate</text>
        <dbReference type="Rhea" id="RHEA:23932"/>
        <dbReference type="ChEBI" id="CHEBI:57599"/>
        <dbReference type="ChEBI" id="CHEBI:57666"/>
        <dbReference type="EC" id="5.1.3.9"/>
    </reaction>
</comment>
<comment type="pathway">
    <text evidence="1">Amino-sugar metabolism; N-acetylneuraminate degradation; D-fructose 6-phosphate from N-acetylneuraminate: step 3/5.</text>
</comment>
<comment type="similarity">
    <text evidence="1">Belongs to the NanE family.</text>
</comment>
<proteinExistence type="inferred from homology"/>
<dbReference type="EC" id="5.1.3.9" evidence="1"/>
<dbReference type="EMBL" id="CP000305">
    <property type="protein sequence ID" value="ABG17692.1"/>
    <property type="molecule type" value="Genomic_DNA"/>
</dbReference>
<dbReference type="EMBL" id="ACNQ01000008">
    <property type="protein sequence ID" value="EEO77814.1"/>
    <property type="molecule type" value="Genomic_DNA"/>
</dbReference>
<dbReference type="SMR" id="Q1CJY8"/>
<dbReference type="KEGG" id="ypn:YPN_1362"/>
<dbReference type="HOGENOM" id="CLU_086300_0_0_6"/>
<dbReference type="UniPathway" id="UPA00629">
    <property type="reaction ID" value="UER00682"/>
</dbReference>
<dbReference type="Proteomes" id="UP000008936">
    <property type="component" value="Chromosome"/>
</dbReference>
<dbReference type="GO" id="GO:0005829">
    <property type="term" value="C:cytosol"/>
    <property type="evidence" value="ECO:0007669"/>
    <property type="project" value="TreeGrafter"/>
</dbReference>
<dbReference type="GO" id="GO:0047465">
    <property type="term" value="F:N-acylglucosamine-6-phosphate 2-epimerase activity"/>
    <property type="evidence" value="ECO:0007669"/>
    <property type="project" value="UniProtKB-EC"/>
</dbReference>
<dbReference type="GO" id="GO:0005975">
    <property type="term" value="P:carbohydrate metabolic process"/>
    <property type="evidence" value="ECO:0007669"/>
    <property type="project" value="UniProtKB-UniRule"/>
</dbReference>
<dbReference type="GO" id="GO:0006053">
    <property type="term" value="P:N-acetylmannosamine catabolic process"/>
    <property type="evidence" value="ECO:0007669"/>
    <property type="project" value="TreeGrafter"/>
</dbReference>
<dbReference type="GO" id="GO:0019262">
    <property type="term" value="P:N-acetylneuraminate catabolic process"/>
    <property type="evidence" value="ECO:0007669"/>
    <property type="project" value="UniProtKB-UniRule"/>
</dbReference>
<dbReference type="CDD" id="cd04729">
    <property type="entry name" value="NanE"/>
    <property type="match status" value="1"/>
</dbReference>
<dbReference type="FunFam" id="3.20.20.70:FF:000035">
    <property type="entry name" value="Putative N-acetylmannosamine-6-phosphate 2-epimerase"/>
    <property type="match status" value="1"/>
</dbReference>
<dbReference type="Gene3D" id="3.20.20.70">
    <property type="entry name" value="Aldolase class I"/>
    <property type="match status" value="1"/>
</dbReference>
<dbReference type="HAMAP" id="MF_01235">
    <property type="entry name" value="ManNAc6P_epimer"/>
    <property type="match status" value="1"/>
</dbReference>
<dbReference type="InterPro" id="IPR013785">
    <property type="entry name" value="Aldolase_TIM"/>
</dbReference>
<dbReference type="InterPro" id="IPR007260">
    <property type="entry name" value="NanE"/>
</dbReference>
<dbReference type="InterPro" id="IPR011060">
    <property type="entry name" value="RibuloseP-bd_barrel"/>
</dbReference>
<dbReference type="NCBIfam" id="NF002231">
    <property type="entry name" value="PRK01130.1"/>
    <property type="match status" value="1"/>
</dbReference>
<dbReference type="PANTHER" id="PTHR36204">
    <property type="entry name" value="N-ACETYLMANNOSAMINE-6-PHOSPHATE 2-EPIMERASE-RELATED"/>
    <property type="match status" value="1"/>
</dbReference>
<dbReference type="PANTHER" id="PTHR36204:SF1">
    <property type="entry name" value="N-ACETYLMANNOSAMINE-6-PHOSPHATE 2-EPIMERASE-RELATED"/>
    <property type="match status" value="1"/>
</dbReference>
<dbReference type="Pfam" id="PF04131">
    <property type="entry name" value="NanE"/>
    <property type="match status" value="1"/>
</dbReference>
<dbReference type="SUPFAM" id="SSF51366">
    <property type="entry name" value="Ribulose-phoshate binding barrel"/>
    <property type="match status" value="1"/>
</dbReference>
<name>NANE_YERPN</name>